<organism>
    <name type="scientific">Salmonella paratyphi B (strain ATCC BAA-1250 / SPB7)</name>
    <dbReference type="NCBI Taxonomy" id="1016998"/>
    <lineage>
        <taxon>Bacteria</taxon>
        <taxon>Pseudomonadati</taxon>
        <taxon>Pseudomonadota</taxon>
        <taxon>Gammaproteobacteria</taxon>
        <taxon>Enterobacterales</taxon>
        <taxon>Enterobacteriaceae</taxon>
        <taxon>Salmonella</taxon>
    </lineage>
</organism>
<feature type="chain" id="PRO_1000085084" description="Phosphatidylglycerol--prolipoprotein diacylglyceryl transferase">
    <location>
        <begin position="1"/>
        <end position="291"/>
    </location>
</feature>
<feature type="transmembrane region" description="Helical" evidence="1">
    <location>
        <begin position="21"/>
        <end position="41"/>
    </location>
</feature>
<feature type="transmembrane region" description="Helical" evidence="1">
    <location>
        <begin position="60"/>
        <end position="80"/>
    </location>
</feature>
<feature type="transmembrane region" description="Helical" evidence="1">
    <location>
        <begin position="96"/>
        <end position="116"/>
    </location>
</feature>
<feature type="transmembrane region" description="Helical" evidence="1">
    <location>
        <begin position="130"/>
        <end position="150"/>
    </location>
</feature>
<feature type="transmembrane region" description="Helical" evidence="1">
    <location>
        <begin position="198"/>
        <end position="218"/>
    </location>
</feature>
<feature type="transmembrane region" description="Helical" evidence="1">
    <location>
        <begin position="225"/>
        <end position="245"/>
    </location>
</feature>
<feature type="transmembrane region" description="Helical" evidence="1">
    <location>
        <begin position="260"/>
        <end position="280"/>
    </location>
</feature>
<feature type="binding site" evidence="1">
    <location>
        <position position="143"/>
    </location>
    <ligand>
        <name>a 1,2-diacyl-sn-glycero-3-phospho-(1'-sn-glycerol)</name>
        <dbReference type="ChEBI" id="CHEBI:64716"/>
    </ligand>
</feature>
<gene>
    <name evidence="1" type="primary">lgt</name>
    <name type="ordered locus">SPAB_03734</name>
</gene>
<sequence length="291" mass="33075">MTSSYLHFPDFDPVIFSIGPVALHWYGLMYLVGFVFAMWLAVRRANRPGSGWTKNEVENLLYAGFLGVFLGGRIGYVLFYNFPLFLDNPLYLFRVWDGGMSFHGGLIGVILVMIIFARRTKRSFFQVSDFIAPLIPFGLGAGRLGNFINGELWGRVDPDFRFAMLFPGSRAEDIALLPSHPQWQPIFDTYGVLPRHPSQLYELALEGVVLFIILNLFIRKPRPMGAVSGLFLIGYGAFRIIVEFFRQPDAQFTGAWVQYISMGQILSIPMIIAGAIMMVWAYRRRPQQHVS</sequence>
<protein>
    <recommendedName>
        <fullName evidence="1">Phosphatidylglycerol--prolipoprotein diacylglyceryl transferase</fullName>
        <ecNumber evidence="1">2.5.1.145</ecNumber>
    </recommendedName>
</protein>
<comment type="function">
    <text evidence="1">Catalyzes the transfer of the diacylglyceryl group from phosphatidylglycerol to the sulfhydryl group of the N-terminal cysteine of a prolipoprotein, the first step in the formation of mature lipoproteins.</text>
</comment>
<comment type="catalytic activity">
    <reaction evidence="1">
        <text>L-cysteinyl-[prolipoprotein] + a 1,2-diacyl-sn-glycero-3-phospho-(1'-sn-glycerol) = an S-1,2-diacyl-sn-glyceryl-L-cysteinyl-[prolipoprotein] + sn-glycerol 1-phosphate + H(+)</text>
        <dbReference type="Rhea" id="RHEA:56712"/>
        <dbReference type="Rhea" id="RHEA-COMP:14679"/>
        <dbReference type="Rhea" id="RHEA-COMP:14680"/>
        <dbReference type="ChEBI" id="CHEBI:15378"/>
        <dbReference type="ChEBI" id="CHEBI:29950"/>
        <dbReference type="ChEBI" id="CHEBI:57685"/>
        <dbReference type="ChEBI" id="CHEBI:64716"/>
        <dbReference type="ChEBI" id="CHEBI:140658"/>
        <dbReference type="EC" id="2.5.1.145"/>
    </reaction>
</comment>
<comment type="pathway">
    <text evidence="1">Protein modification; lipoprotein biosynthesis (diacylglyceryl transfer).</text>
</comment>
<comment type="subcellular location">
    <subcellularLocation>
        <location evidence="1">Cell inner membrane</location>
        <topology evidence="1">Multi-pass membrane protein</topology>
    </subcellularLocation>
</comment>
<comment type="similarity">
    <text evidence="1">Belongs to the Lgt family.</text>
</comment>
<accession>A9N2L8</accession>
<keyword id="KW-0997">Cell inner membrane</keyword>
<keyword id="KW-1003">Cell membrane</keyword>
<keyword id="KW-0472">Membrane</keyword>
<keyword id="KW-0808">Transferase</keyword>
<keyword id="KW-0812">Transmembrane</keyword>
<keyword id="KW-1133">Transmembrane helix</keyword>
<proteinExistence type="inferred from homology"/>
<evidence type="ECO:0000255" key="1">
    <source>
        <dbReference type="HAMAP-Rule" id="MF_01147"/>
    </source>
</evidence>
<reference key="1">
    <citation type="submission" date="2007-11" db="EMBL/GenBank/DDBJ databases">
        <authorList>
            <consortium name="The Salmonella enterica serovar Paratyphi B Genome Sequencing Project"/>
            <person name="McClelland M."/>
            <person name="Sanderson E.K."/>
            <person name="Porwollik S."/>
            <person name="Spieth J."/>
            <person name="Clifton W.S."/>
            <person name="Fulton R."/>
            <person name="Cordes M."/>
            <person name="Wollam A."/>
            <person name="Shah N."/>
            <person name="Pepin K."/>
            <person name="Bhonagiri V."/>
            <person name="Nash W."/>
            <person name="Johnson M."/>
            <person name="Thiruvilangam P."/>
            <person name="Wilson R."/>
        </authorList>
    </citation>
    <scope>NUCLEOTIDE SEQUENCE [LARGE SCALE GENOMIC DNA]</scope>
    <source>
        <strain>ATCC BAA-1250 / SPB7</strain>
    </source>
</reference>
<dbReference type="EC" id="2.5.1.145" evidence="1"/>
<dbReference type="EMBL" id="CP000886">
    <property type="protein sequence ID" value="ABX69069.1"/>
    <property type="molecule type" value="Genomic_DNA"/>
</dbReference>
<dbReference type="RefSeq" id="WP_000204645.1">
    <property type="nucleotide sequence ID" value="NC_010102.1"/>
</dbReference>
<dbReference type="SMR" id="A9N2L8"/>
<dbReference type="KEGG" id="spq:SPAB_03734"/>
<dbReference type="PATRIC" id="fig|1016998.12.peg.3515"/>
<dbReference type="HOGENOM" id="CLU_013386_1_0_6"/>
<dbReference type="BioCyc" id="SENT1016998:SPAB_RS15210-MONOMER"/>
<dbReference type="UniPathway" id="UPA00664"/>
<dbReference type="Proteomes" id="UP000008556">
    <property type="component" value="Chromosome"/>
</dbReference>
<dbReference type="GO" id="GO:0005886">
    <property type="term" value="C:plasma membrane"/>
    <property type="evidence" value="ECO:0007669"/>
    <property type="project" value="UniProtKB-SubCell"/>
</dbReference>
<dbReference type="GO" id="GO:0008961">
    <property type="term" value="F:phosphatidylglycerol-prolipoprotein diacylglyceryl transferase activity"/>
    <property type="evidence" value="ECO:0007669"/>
    <property type="project" value="UniProtKB-UniRule"/>
</dbReference>
<dbReference type="GO" id="GO:0042158">
    <property type="term" value="P:lipoprotein biosynthetic process"/>
    <property type="evidence" value="ECO:0007669"/>
    <property type="project" value="UniProtKB-UniRule"/>
</dbReference>
<dbReference type="HAMAP" id="MF_01147">
    <property type="entry name" value="Lgt"/>
    <property type="match status" value="1"/>
</dbReference>
<dbReference type="InterPro" id="IPR001640">
    <property type="entry name" value="Lgt"/>
</dbReference>
<dbReference type="NCBIfam" id="TIGR00544">
    <property type="entry name" value="lgt"/>
    <property type="match status" value="1"/>
</dbReference>
<dbReference type="PANTHER" id="PTHR30589:SF0">
    <property type="entry name" value="PHOSPHATIDYLGLYCEROL--PROLIPOPROTEIN DIACYLGLYCERYL TRANSFERASE"/>
    <property type="match status" value="1"/>
</dbReference>
<dbReference type="PANTHER" id="PTHR30589">
    <property type="entry name" value="PROLIPOPROTEIN DIACYLGLYCERYL TRANSFERASE"/>
    <property type="match status" value="1"/>
</dbReference>
<dbReference type="Pfam" id="PF01790">
    <property type="entry name" value="LGT"/>
    <property type="match status" value="1"/>
</dbReference>
<dbReference type="PROSITE" id="PS01311">
    <property type="entry name" value="LGT"/>
    <property type="match status" value="1"/>
</dbReference>
<name>LGT_SALPB</name>